<gene>
    <name type="primary">Nop14</name>
    <name type="synonym">Nol14</name>
</gene>
<evidence type="ECO:0000250" key="1"/>
<evidence type="ECO:0000250" key="2">
    <source>
        <dbReference type="UniProtKB" id="P78316"/>
    </source>
</evidence>
<evidence type="ECO:0000256" key="3">
    <source>
        <dbReference type="SAM" id="MobiDB-lite"/>
    </source>
</evidence>
<evidence type="ECO:0000305" key="4"/>
<evidence type="ECO:0007744" key="5">
    <source>
    </source>
</evidence>
<evidence type="ECO:0007744" key="6">
    <source>
    </source>
</evidence>
<evidence type="ECO:0007744" key="7">
    <source>
    </source>
</evidence>
<organism>
    <name type="scientific">Mus musculus</name>
    <name type="common">Mouse</name>
    <dbReference type="NCBI Taxonomy" id="10090"/>
    <lineage>
        <taxon>Eukaryota</taxon>
        <taxon>Metazoa</taxon>
        <taxon>Chordata</taxon>
        <taxon>Craniata</taxon>
        <taxon>Vertebrata</taxon>
        <taxon>Euteleostomi</taxon>
        <taxon>Mammalia</taxon>
        <taxon>Eutheria</taxon>
        <taxon>Euarchontoglires</taxon>
        <taxon>Glires</taxon>
        <taxon>Rodentia</taxon>
        <taxon>Myomorpha</taxon>
        <taxon>Muroidea</taxon>
        <taxon>Muridae</taxon>
        <taxon>Murinae</taxon>
        <taxon>Mus</taxon>
        <taxon>Mus</taxon>
    </lineage>
</organism>
<keyword id="KW-0539">Nucleus</keyword>
<keyword id="KW-0597">Phosphoprotein</keyword>
<keyword id="KW-1185">Reference proteome</keyword>
<keyword id="KW-0690">Ribosome biogenesis</keyword>
<keyword id="KW-0698">rRNA processing</keyword>
<proteinExistence type="evidence at protein level"/>
<name>NOP14_MOUSE</name>
<dbReference type="EMBL" id="CH466524">
    <property type="protein sequence ID" value="EDL37463.1"/>
    <property type="molecule type" value="Genomic_DNA"/>
</dbReference>
<dbReference type="EMBL" id="BC024998">
    <property type="protein sequence ID" value="AAH24998.1"/>
    <property type="molecule type" value="mRNA"/>
</dbReference>
<dbReference type="EMBL" id="BC043043">
    <property type="protein sequence ID" value="AAH43043.1"/>
    <property type="molecule type" value="mRNA"/>
</dbReference>
<dbReference type="CCDS" id="CCDS19218.1"/>
<dbReference type="RefSeq" id="NP_083554.2">
    <property type="nucleotide sequence ID" value="NM_029278.3"/>
</dbReference>
<dbReference type="SMR" id="Q8R3N1"/>
<dbReference type="BioGRID" id="217464">
    <property type="interactions" value="50"/>
</dbReference>
<dbReference type="FunCoup" id="Q8R3N1">
    <property type="interactions" value="3560"/>
</dbReference>
<dbReference type="STRING" id="10090.ENSMUSP00000038382"/>
<dbReference type="GlyGen" id="Q8R3N1">
    <property type="glycosylation" value="1 site"/>
</dbReference>
<dbReference type="iPTMnet" id="Q8R3N1"/>
<dbReference type="PhosphoSitePlus" id="Q8R3N1"/>
<dbReference type="jPOST" id="Q8R3N1"/>
<dbReference type="PaxDb" id="10090-ENSMUSP00000038382"/>
<dbReference type="PeptideAtlas" id="Q8R3N1"/>
<dbReference type="ProteomicsDB" id="252991"/>
<dbReference type="Pumba" id="Q8R3N1"/>
<dbReference type="Antibodypedia" id="22420">
    <property type="antibodies" value="69 antibodies from 19 providers"/>
</dbReference>
<dbReference type="Ensembl" id="ENSMUST00000041364.13">
    <property type="protein sequence ID" value="ENSMUSP00000038382.10"/>
    <property type="gene ID" value="ENSMUSG00000036693.13"/>
</dbReference>
<dbReference type="GeneID" id="75416"/>
<dbReference type="KEGG" id="mmu:75416"/>
<dbReference type="UCSC" id="uc008xcx.1">
    <property type="organism name" value="mouse"/>
</dbReference>
<dbReference type="AGR" id="MGI:1922666"/>
<dbReference type="CTD" id="8602"/>
<dbReference type="MGI" id="MGI:1922666">
    <property type="gene designation" value="Nop14"/>
</dbReference>
<dbReference type="VEuPathDB" id="HostDB:ENSMUSG00000036693"/>
<dbReference type="eggNOG" id="KOG2147">
    <property type="taxonomic scope" value="Eukaryota"/>
</dbReference>
<dbReference type="GeneTree" id="ENSGT00390000017459"/>
<dbReference type="HOGENOM" id="CLU_008874_1_1_1"/>
<dbReference type="InParanoid" id="Q8R3N1"/>
<dbReference type="OMA" id="KSCWPSL"/>
<dbReference type="OrthoDB" id="441771at2759"/>
<dbReference type="PhylomeDB" id="Q8R3N1"/>
<dbReference type="TreeFam" id="TF105698"/>
<dbReference type="Reactome" id="R-MMU-6791226">
    <property type="pathway name" value="Major pathway of rRNA processing in the nucleolus and cytosol"/>
</dbReference>
<dbReference type="BioGRID-ORCS" id="75416">
    <property type="hits" value="22 hits in 77 CRISPR screens"/>
</dbReference>
<dbReference type="ChiTaRS" id="Nop14">
    <property type="organism name" value="mouse"/>
</dbReference>
<dbReference type="PRO" id="PR:Q8R3N1"/>
<dbReference type="Proteomes" id="UP000000589">
    <property type="component" value="Chromosome 5"/>
</dbReference>
<dbReference type="RNAct" id="Q8R3N1">
    <property type="molecule type" value="protein"/>
</dbReference>
<dbReference type="Bgee" id="ENSMUSG00000036693">
    <property type="expression patterns" value="Expressed in embryonic post-anal tail and 258 other cell types or tissues"/>
</dbReference>
<dbReference type="ExpressionAtlas" id="Q8R3N1">
    <property type="expression patterns" value="baseline and differential"/>
</dbReference>
<dbReference type="GO" id="GO:0005730">
    <property type="term" value="C:nucleolus"/>
    <property type="evidence" value="ECO:0000250"/>
    <property type="project" value="UniProtKB"/>
</dbReference>
<dbReference type="GO" id="GO:0005654">
    <property type="term" value="C:nucleoplasm"/>
    <property type="evidence" value="ECO:0007669"/>
    <property type="project" value="Ensembl"/>
</dbReference>
<dbReference type="GO" id="GO:0032040">
    <property type="term" value="C:small-subunit processome"/>
    <property type="evidence" value="ECO:0007669"/>
    <property type="project" value="InterPro"/>
</dbReference>
<dbReference type="GO" id="GO:0019899">
    <property type="term" value="F:enzyme binding"/>
    <property type="evidence" value="ECO:0007669"/>
    <property type="project" value="Ensembl"/>
</dbReference>
<dbReference type="GO" id="GO:0030515">
    <property type="term" value="F:snoRNA binding"/>
    <property type="evidence" value="ECO:0000250"/>
    <property type="project" value="UniProtKB"/>
</dbReference>
<dbReference type="GO" id="GO:0042274">
    <property type="term" value="P:ribosomal small subunit biogenesis"/>
    <property type="evidence" value="ECO:0000250"/>
    <property type="project" value="UniProtKB"/>
</dbReference>
<dbReference type="GO" id="GO:0006364">
    <property type="term" value="P:rRNA processing"/>
    <property type="evidence" value="ECO:0007669"/>
    <property type="project" value="UniProtKB-KW"/>
</dbReference>
<dbReference type="InterPro" id="IPR007276">
    <property type="entry name" value="Nop14"/>
</dbReference>
<dbReference type="PANTHER" id="PTHR23183">
    <property type="entry name" value="NOP14"/>
    <property type="match status" value="1"/>
</dbReference>
<dbReference type="PANTHER" id="PTHR23183:SF0">
    <property type="entry name" value="NUCLEOLAR PROTEIN 14"/>
    <property type="match status" value="1"/>
</dbReference>
<dbReference type="Pfam" id="PF04147">
    <property type="entry name" value="Nop14"/>
    <property type="match status" value="1"/>
</dbReference>
<comment type="function">
    <text evidence="1">Involved in nucleolar processing of pre-18S ribosomal RNA. Has a role in the nuclear export of 40S pre-ribosomal subunit to the cytoplasm (By similarity).</text>
</comment>
<comment type="subunit">
    <text evidence="1">Component of the ribosomal small subunit (SSU) processome.</text>
</comment>
<comment type="subcellular location">
    <subcellularLocation>
        <location evidence="1">Nucleus</location>
        <location evidence="1">Nucleolus</location>
    </subcellularLocation>
</comment>
<comment type="similarity">
    <text evidence="4">Belongs to the NOP14 family.</text>
</comment>
<sequence>MGKAKRTGARRQVHKAPAGASGGPAKTNPNPFEVKVNRQKFQILGRKTRHDVGLPGVSRARAIRKRTQTLLKEYKERNKSNVFADKRFGEYNSNISPEEKMMKRFALEQQRYHEKKNIYNLNEDEELTHYGQSLADIEKHNDIVDSDSDTEDRGALSAELTASHFGGGVHKNSSQKEGEDGDKPKTRKELIEELIAKSKQEKRERQAQREDALELTEKLDQDWKEIQILMSRKPKKSEDKEKKEKPQPDEYDMMVRELGFEMKAQPSNRMKTEEELAKEEQERLKKLEAERLRRMLGKDEHENKKKPKHTSADDLNDGFILDKDDRRLLSYKDGKMNIEDVQEEQSKEADGQENDQKEGEDDSEEEDESHEDSEESEDPDSHSDLESNIESEEENETPKKEQRQTPGGKLPKDDQKAQKAVAAELPYVFAAPESFEELKFLLSGRSMEEQLLVVERIQKCNHPSLAVGNKAKLEKLFGFLLQYIGDLATDSTPDLKTIDKLVVHLYSLCQMFPESASDSIRFVLRDAMHEMEEMIETKGRAAFPGLDVLIYLKITGLLFPTSDFWHPVVTPALLCMSQMLTKCPVMSLQDVIKGLFVCCLFLEYVSLSRRFIPELFNFLLGILYIATPNTKSQGSTLVHPFRALGKNSELLVVSDKADVTTWQRGSLPLHWANRLSTLTATEANHTRLSCVASCLSLMKHCVLMYQALPSFHAIFRPHQALLSKHLADCSLPQELQELAQSILSAMEGQKQHCRPLVCEKSKPVPLKQFTPRLVKVLEFGRKQGSSKEEQERKRLIHKHKREFKGAVREIRKDNQFLARMQLSEIMERDAERKRKVKQLFNSLATQEGEWKALKRKKFKK</sequence>
<reference key="1">
    <citation type="submission" date="2005-07" db="EMBL/GenBank/DDBJ databases">
        <authorList>
            <person name="Mural R.J."/>
            <person name="Adams M.D."/>
            <person name="Myers E.W."/>
            <person name="Smith H.O."/>
            <person name="Venter J.C."/>
        </authorList>
    </citation>
    <scope>NUCLEOTIDE SEQUENCE [LARGE SCALE GENOMIC DNA]</scope>
</reference>
<reference key="2">
    <citation type="journal article" date="2004" name="Genome Res.">
        <title>The status, quality, and expansion of the NIH full-length cDNA project: the Mammalian Gene Collection (MGC).</title>
        <authorList>
            <consortium name="The MGC Project Team"/>
        </authorList>
    </citation>
    <scope>NUCLEOTIDE SEQUENCE [LARGE SCALE MRNA]</scope>
    <source>
        <strain>C57BL/6J</strain>
        <strain>Czech II</strain>
        <tissue>Brain</tissue>
        <tissue>Mammary tumor</tissue>
    </source>
</reference>
<reference key="3">
    <citation type="journal article" date="2007" name="Proc. Natl. Acad. Sci. U.S.A.">
        <title>Large-scale phosphorylation analysis of mouse liver.</title>
        <authorList>
            <person name="Villen J."/>
            <person name="Beausoleil S.A."/>
            <person name="Gerber S.A."/>
            <person name="Gygi S.P."/>
        </authorList>
    </citation>
    <scope>PHOSPHORYLATION [LARGE SCALE ANALYSIS] AT SER-146 AND SER-148</scope>
    <scope>IDENTIFICATION BY MASS SPECTROMETRY [LARGE SCALE ANALYSIS]</scope>
    <source>
        <tissue>Liver</tissue>
    </source>
</reference>
<reference key="4">
    <citation type="journal article" date="2009" name="Immunity">
        <title>The phagosomal proteome in interferon-gamma-activated macrophages.</title>
        <authorList>
            <person name="Trost M."/>
            <person name="English L."/>
            <person name="Lemieux S."/>
            <person name="Courcelles M."/>
            <person name="Desjardins M."/>
            <person name="Thibault P."/>
        </authorList>
    </citation>
    <scope>PHOSPHORYLATION [LARGE SCALE ANALYSIS] AT SER-146 AND SER-148</scope>
    <scope>IDENTIFICATION BY MASS SPECTROMETRY [LARGE SCALE ANALYSIS]</scope>
</reference>
<reference key="5">
    <citation type="journal article" date="2010" name="Cell">
        <title>A tissue-specific atlas of mouse protein phosphorylation and expression.</title>
        <authorList>
            <person name="Huttlin E.L."/>
            <person name="Jedrychowski M.P."/>
            <person name="Elias J.E."/>
            <person name="Goswami T."/>
            <person name="Rad R."/>
            <person name="Beausoleil S.A."/>
            <person name="Villen J."/>
            <person name="Haas W."/>
            <person name="Sowa M.E."/>
            <person name="Gygi S.P."/>
        </authorList>
    </citation>
    <scope>PHOSPHORYLATION [LARGE SCALE ANALYSIS] AT SER-96; SER-146 AND SER-148</scope>
    <scope>IDENTIFICATION BY MASS SPECTROMETRY [LARGE SCALE ANALYSIS]</scope>
    <source>
        <tissue>Brain</tissue>
        <tissue>Kidney</tissue>
        <tissue>Lung</tissue>
        <tissue>Spleen</tissue>
        <tissue>Testis</tissue>
    </source>
</reference>
<accession>Q8R3N1</accession>
<accession>Q5RL78</accession>
<protein>
    <recommendedName>
        <fullName>Nucleolar protein 14</fullName>
    </recommendedName>
    <alternativeName>
        <fullName>Nucleolar complex protein 14</fullName>
    </alternativeName>
</protein>
<feature type="chain" id="PRO_0000137156" description="Nucleolar protein 14">
    <location>
        <begin position="1"/>
        <end position="860"/>
    </location>
</feature>
<feature type="region of interest" description="Disordered" evidence="3">
    <location>
        <begin position="1"/>
        <end position="33"/>
    </location>
</feature>
<feature type="region of interest" description="Disordered" evidence="3">
    <location>
        <begin position="161"/>
        <end position="417"/>
    </location>
</feature>
<feature type="compositionally biased region" description="Basic residues" evidence="3">
    <location>
        <begin position="1"/>
        <end position="14"/>
    </location>
</feature>
<feature type="compositionally biased region" description="Low complexity" evidence="3">
    <location>
        <begin position="16"/>
        <end position="25"/>
    </location>
</feature>
<feature type="compositionally biased region" description="Basic and acidic residues" evidence="3">
    <location>
        <begin position="174"/>
        <end position="225"/>
    </location>
</feature>
<feature type="compositionally biased region" description="Basic and acidic residues" evidence="3">
    <location>
        <begin position="236"/>
        <end position="260"/>
    </location>
</feature>
<feature type="compositionally biased region" description="Basic and acidic residues" evidence="3">
    <location>
        <begin position="270"/>
        <end position="303"/>
    </location>
</feature>
<feature type="compositionally biased region" description="Basic and acidic residues" evidence="3">
    <location>
        <begin position="320"/>
        <end position="357"/>
    </location>
</feature>
<feature type="compositionally biased region" description="Acidic residues" evidence="3">
    <location>
        <begin position="358"/>
        <end position="378"/>
    </location>
</feature>
<feature type="modified residue" description="Phosphoserine" evidence="7">
    <location>
        <position position="96"/>
    </location>
</feature>
<feature type="modified residue" description="Phosphoserine" evidence="5 6 7">
    <location>
        <position position="146"/>
    </location>
</feature>
<feature type="modified residue" description="Phosphoserine" evidence="5 6 7">
    <location>
        <position position="148"/>
    </location>
</feature>
<feature type="modified residue" description="Phosphoserine" evidence="2">
    <location>
        <position position="346"/>
    </location>
</feature>
<feature type="sequence conflict" description="In Ref. 1; AAH24998." evidence="4" ref="1">
    <original>A</original>
    <variation>T</variation>
    <location>
        <position position="18"/>
    </location>
</feature>
<feature type="sequence conflict" description="In Ref. 1; AAH24998." evidence="4" ref="1">
    <original>D</original>
    <variation>N</variation>
    <location>
        <position position="239"/>
    </location>
</feature>
<feature type="sequence conflict" description="In Ref. 1; AAH24998." evidence="4" ref="1">
    <original>D</original>
    <variation>E</variation>
    <location>
        <position position="362"/>
    </location>
</feature>
<feature type="sequence conflict" description="In Ref. 1; AAH24998." evidence="4" ref="1">
    <original>T</original>
    <variation>I</variation>
    <location>
        <position position="489"/>
    </location>
</feature>
<feature type="sequence conflict" description="In Ref. 1; AAH24998." evidence="4" ref="1">
    <original>V</original>
    <variation>M</variation>
    <location>
        <position position="503"/>
    </location>
</feature>
<feature type="sequence conflict" description="In Ref. 1; AAH24998." evidence="4" ref="1">
    <original>I</original>
    <variation>L</variation>
    <location>
        <position position="520"/>
    </location>
</feature>
<feature type="sequence conflict" description="In Ref. 1; AAH24998." evidence="4" ref="1">
    <original>T</original>
    <variation>A</variation>
    <location>
        <position position="660"/>
    </location>
</feature>
<feature type="sequence conflict" description="In Ref. 1; AAH24998." evidence="4" ref="1">
    <original>S</original>
    <variation>L</variation>
    <location>
        <position position="693"/>
    </location>
</feature>
<feature type="sequence conflict" description="In Ref. 1; AAH24998." evidence="4" ref="1">
    <original>F</original>
    <variation>V</variation>
    <location>
        <position position="715"/>
    </location>
</feature>
<feature type="sequence conflict" description="In Ref. 1; AAH24998." evidence="4" ref="1">
    <original>S</original>
    <variation>A</variation>
    <location>
        <position position="723"/>
    </location>
</feature>
<feature type="sequence conflict" description="In Ref. 1; AAH24998." evidence="4" ref="1">
    <original>Q</original>
    <variation>K</variation>
    <location>
        <position position="736"/>
    </location>
</feature>
<feature type="sequence conflict" description="In Ref. 1; AAH24998." evidence="4" ref="1">
    <original>Q</original>
    <variation>L</variation>
    <location>
        <position position="749"/>
    </location>
</feature>